<accession>O68126</accession>
<accession>D5AUW6</accession>
<feature type="chain" id="PRO_0000176826" description="Small ribosomal subunit protein bS6">
    <location>
        <begin position="1"/>
        <end position="144"/>
    </location>
</feature>
<feature type="region of interest" description="Disordered" evidence="2">
    <location>
        <begin position="92"/>
        <end position="144"/>
    </location>
</feature>
<feature type="compositionally biased region" description="Basic and acidic residues" evidence="2">
    <location>
        <begin position="93"/>
        <end position="144"/>
    </location>
</feature>
<dbReference type="EMBL" id="AF010496">
    <property type="protein sequence ID" value="AAC16216.1"/>
    <property type="molecule type" value="Genomic_DNA"/>
</dbReference>
<dbReference type="EMBL" id="CP001312">
    <property type="protein sequence ID" value="ADE85755.1"/>
    <property type="molecule type" value="Genomic_DNA"/>
</dbReference>
<dbReference type="PIR" id="T03563">
    <property type="entry name" value="T03563"/>
</dbReference>
<dbReference type="RefSeq" id="WP_013067734.1">
    <property type="nucleotide sequence ID" value="NC_014034.1"/>
</dbReference>
<dbReference type="SMR" id="O68126"/>
<dbReference type="STRING" id="272942.RCAP_rcc02011"/>
<dbReference type="GeneID" id="31490875"/>
<dbReference type="KEGG" id="rcp:RCAP_rcc02011"/>
<dbReference type="eggNOG" id="COG0360">
    <property type="taxonomic scope" value="Bacteria"/>
</dbReference>
<dbReference type="HOGENOM" id="CLU_113441_2_0_5"/>
<dbReference type="OrthoDB" id="9812702at2"/>
<dbReference type="Proteomes" id="UP000002361">
    <property type="component" value="Chromosome"/>
</dbReference>
<dbReference type="GO" id="GO:0022627">
    <property type="term" value="C:cytosolic small ribosomal subunit"/>
    <property type="evidence" value="ECO:0007669"/>
    <property type="project" value="TreeGrafter"/>
</dbReference>
<dbReference type="GO" id="GO:0070181">
    <property type="term" value="F:small ribosomal subunit rRNA binding"/>
    <property type="evidence" value="ECO:0007669"/>
    <property type="project" value="TreeGrafter"/>
</dbReference>
<dbReference type="GO" id="GO:0003735">
    <property type="term" value="F:structural constituent of ribosome"/>
    <property type="evidence" value="ECO:0007669"/>
    <property type="project" value="InterPro"/>
</dbReference>
<dbReference type="GO" id="GO:0006412">
    <property type="term" value="P:translation"/>
    <property type="evidence" value="ECO:0007669"/>
    <property type="project" value="UniProtKB-UniRule"/>
</dbReference>
<dbReference type="CDD" id="cd00473">
    <property type="entry name" value="bS6"/>
    <property type="match status" value="1"/>
</dbReference>
<dbReference type="Gene3D" id="3.30.70.60">
    <property type="match status" value="1"/>
</dbReference>
<dbReference type="HAMAP" id="MF_00360">
    <property type="entry name" value="Ribosomal_bS6"/>
    <property type="match status" value="1"/>
</dbReference>
<dbReference type="InterPro" id="IPR000529">
    <property type="entry name" value="Ribosomal_bS6"/>
</dbReference>
<dbReference type="InterPro" id="IPR035980">
    <property type="entry name" value="Ribosomal_bS6_sf"/>
</dbReference>
<dbReference type="InterPro" id="IPR020814">
    <property type="entry name" value="Ribosomal_S6_plastid/chlpt"/>
</dbReference>
<dbReference type="InterPro" id="IPR014717">
    <property type="entry name" value="Transl_elong_EF1B/ribsomal_bS6"/>
</dbReference>
<dbReference type="NCBIfam" id="TIGR00166">
    <property type="entry name" value="S6"/>
    <property type="match status" value="1"/>
</dbReference>
<dbReference type="PANTHER" id="PTHR21011">
    <property type="entry name" value="MITOCHONDRIAL 28S RIBOSOMAL PROTEIN S6"/>
    <property type="match status" value="1"/>
</dbReference>
<dbReference type="PANTHER" id="PTHR21011:SF1">
    <property type="entry name" value="SMALL RIBOSOMAL SUBUNIT PROTEIN BS6M"/>
    <property type="match status" value="1"/>
</dbReference>
<dbReference type="Pfam" id="PF01250">
    <property type="entry name" value="Ribosomal_S6"/>
    <property type="match status" value="1"/>
</dbReference>
<dbReference type="SUPFAM" id="SSF54995">
    <property type="entry name" value="Ribosomal protein S6"/>
    <property type="match status" value="1"/>
</dbReference>
<name>RS6_RHOCB</name>
<protein>
    <recommendedName>
        <fullName evidence="3">Small ribosomal subunit protein bS6</fullName>
    </recommendedName>
    <alternativeName>
        <fullName>30S ribosomal protein S6</fullName>
    </alternativeName>
</protein>
<comment type="function">
    <text evidence="1">Binds together with bS18 to 16S ribosomal RNA.</text>
</comment>
<comment type="similarity">
    <text evidence="3">Belongs to the bacterial ribosomal protein bS6 family.</text>
</comment>
<gene>
    <name type="primary">rpsF</name>
    <name type="ordered locus">RCAP_rcc02011</name>
</gene>
<proteinExistence type="inferred from homology"/>
<keyword id="KW-1185">Reference proteome</keyword>
<keyword id="KW-0687">Ribonucleoprotein</keyword>
<keyword id="KW-0689">Ribosomal protein</keyword>
<keyword id="KW-0694">RNA-binding</keyword>
<keyword id="KW-0699">rRNA-binding</keyword>
<organism>
    <name type="scientific">Rhodobacter capsulatus (strain ATCC BAA-309 / NBRC 16581 / SB1003)</name>
    <dbReference type="NCBI Taxonomy" id="272942"/>
    <lineage>
        <taxon>Bacteria</taxon>
        <taxon>Pseudomonadati</taxon>
        <taxon>Pseudomonadota</taxon>
        <taxon>Alphaproteobacteria</taxon>
        <taxon>Rhodobacterales</taxon>
        <taxon>Rhodobacter group</taxon>
        <taxon>Rhodobacter</taxon>
    </lineage>
</organism>
<sequence>MPLYEHVLIARQDLSNAQAEGLIEHFSTVIGDNGGKVLGTEYWGVKTMAYKINKNRKGHYGFLRTDAPSAAVQEMERLARLHDDVMRVLTIKVDGHDEGPSVQMQKRDDRGDREERGDRGDRGDRGPRGDRGPREDRGPRPERR</sequence>
<evidence type="ECO:0000250" key="1"/>
<evidence type="ECO:0000256" key="2">
    <source>
        <dbReference type="SAM" id="MobiDB-lite"/>
    </source>
</evidence>
<evidence type="ECO:0000305" key="3"/>
<reference key="1">
    <citation type="journal article" date="1997" name="Proc. Natl. Acad. Sci. U.S.A.">
        <title>Sequence of a 189-kb segment of the chromosome of Rhodobacter capsulatus SB1003.</title>
        <authorList>
            <person name="Vlcek C."/>
            <person name="Paces V."/>
            <person name="Maltsev N."/>
            <person name="Paces J."/>
            <person name="Haselkorn R."/>
            <person name="Fonstein M."/>
        </authorList>
    </citation>
    <scope>NUCLEOTIDE SEQUENCE [GENOMIC DNA]</scope>
    <source>
        <strain>ATCC BAA-309 / NBRC 16581 / SB1003</strain>
    </source>
</reference>
<reference key="2">
    <citation type="journal article" date="2010" name="J. Bacteriol.">
        <title>Complete genome sequence of the photosynthetic purple nonsulfur bacterium Rhodobacter capsulatus SB 1003.</title>
        <authorList>
            <person name="Strnad H."/>
            <person name="Lapidus A."/>
            <person name="Paces J."/>
            <person name="Ulbrich P."/>
            <person name="Vlcek C."/>
            <person name="Paces V."/>
            <person name="Haselkorn R."/>
        </authorList>
    </citation>
    <scope>NUCLEOTIDE SEQUENCE [LARGE SCALE GENOMIC DNA]</scope>
    <source>
        <strain>ATCC BAA-309 / NBRC 16581 / SB1003</strain>
    </source>
</reference>